<proteinExistence type="inferred from homology"/>
<feature type="chain" id="PRO_0000386721" description="Ribosomal RNA small subunit methyltransferase H">
    <location>
        <begin position="1"/>
        <end position="303"/>
    </location>
</feature>
<feature type="binding site" evidence="1">
    <location>
        <begin position="36"/>
        <end position="38"/>
    </location>
    <ligand>
        <name>S-adenosyl-L-methionine</name>
        <dbReference type="ChEBI" id="CHEBI:59789"/>
    </ligand>
</feature>
<feature type="binding site" evidence="1">
    <location>
        <position position="55"/>
    </location>
    <ligand>
        <name>S-adenosyl-L-methionine</name>
        <dbReference type="ChEBI" id="CHEBI:59789"/>
    </ligand>
</feature>
<feature type="binding site" evidence="1">
    <location>
        <position position="81"/>
    </location>
    <ligand>
        <name>S-adenosyl-L-methionine</name>
        <dbReference type="ChEBI" id="CHEBI:59789"/>
    </ligand>
</feature>
<feature type="binding site" evidence="1">
    <location>
        <position position="101"/>
    </location>
    <ligand>
        <name>S-adenosyl-L-methionine</name>
        <dbReference type="ChEBI" id="CHEBI:59789"/>
    </ligand>
</feature>
<feature type="binding site" evidence="1">
    <location>
        <position position="108"/>
    </location>
    <ligand>
        <name>S-adenosyl-L-methionine</name>
        <dbReference type="ChEBI" id="CHEBI:59789"/>
    </ligand>
</feature>
<reference key="1">
    <citation type="journal article" date="2006" name="J. Bacteriol.">
        <title>Living with genome instability: the adaptation of phytoplasmas to diverse environments of their insect and plant hosts.</title>
        <authorList>
            <person name="Bai X."/>
            <person name="Zhang J."/>
            <person name="Ewing A."/>
            <person name="Miller S.A."/>
            <person name="Jancso Radek A."/>
            <person name="Shevchenko D.V."/>
            <person name="Tsukerman K."/>
            <person name="Walunas T."/>
            <person name="Lapidus A."/>
            <person name="Campbell J.W."/>
            <person name="Hogenhout S.A."/>
        </authorList>
    </citation>
    <scope>NUCLEOTIDE SEQUENCE [LARGE SCALE GENOMIC DNA]</scope>
    <source>
        <strain>AYWB</strain>
    </source>
</reference>
<evidence type="ECO:0000255" key="1">
    <source>
        <dbReference type="HAMAP-Rule" id="MF_01007"/>
    </source>
</evidence>
<sequence>MNKQNFHHISVLKKEAIDFLKIKPEGIYVDATLGQCGHTIEIANLLQQGFLYSFDQDVEACTNAKKTLSPHLPIEIIHSIFRIXSPISTTKSFSLDGILFDLGLSSCQIDNPQRGFSYLHNTPLDMRMNINQTITAQYILNNYSFAQLKNIFKLYGEVKNASLVVSEIIKQRPLQTSYDLVSITDRFCNLQKGHSAKKIFQALRIEVNQELESLKQALEQSLDLLKPNARIVVISFHSLEDRIIKHFFKKHSTFVLPKKLPIAIIPQTPLSIITKKAFLPSEEEMQNNSRSISAKLRVAVKNV</sequence>
<accession>Q2NIH4</accession>
<comment type="function">
    <text evidence="1">Specifically methylates the N4 position of cytidine in position 1402 (C1402) of 16S rRNA.</text>
</comment>
<comment type="catalytic activity">
    <reaction evidence="1">
        <text>cytidine(1402) in 16S rRNA + S-adenosyl-L-methionine = N(4)-methylcytidine(1402) in 16S rRNA + S-adenosyl-L-homocysteine + H(+)</text>
        <dbReference type="Rhea" id="RHEA:42928"/>
        <dbReference type="Rhea" id="RHEA-COMP:10286"/>
        <dbReference type="Rhea" id="RHEA-COMP:10287"/>
        <dbReference type="ChEBI" id="CHEBI:15378"/>
        <dbReference type="ChEBI" id="CHEBI:57856"/>
        <dbReference type="ChEBI" id="CHEBI:59789"/>
        <dbReference type="ChEBI" id="CHEBI:74506"/>
        <dbReference type="ChEBI" id="CHEBI:82748"/>
        <dbReference type="EC" id="2.1.1.199"/>
    </reaction>
</comment>
<comment type="subcellular location">
    <subcellularLocation>
        <location evidence="1">Cytoplasm</location>
    </subcellularLocation>
</comment>
<comment type="similarity">
    <text evidence="1">Belongs to the methyltransferase superfamily. RsmH family.</text>
</comment>
<dbReference type="EC" id="2.1.1.199" evidence="1"/>
<dbReference type="EMBL" id="CP000061">
    <property type="protein sequence ID" value="ABC65769.1"/>
    <property type="status" value="ALT_SEQ"/>
    <property type="molecule type" value="Genomic_DNA"/>
</dbReference>
<dbReference type="STRING" id="322098.AYWB_652"/>
<dbReference type="KEGG" id="ayw:AYWB_652"/>
<dbReference type="eggNOG" id="COG0275">
    <property type="taxonomic scope" value="Bacteria"/>
</dbReference>
<dbReference type="HOGENOM" id="CLU_038422_2_1_14"/>
<dbReference type="Proteomes" id="UP000001934">
    <property type="component" value="Chromosome"/>
</dbReference>
<dbReference type="GO" id="GO:0005737">
    <property type="term" value="C:cytoplasm"/>
    <property type="evidence" value="ECO:0007669"/>
    <property type="project" value="UniProtKB-SubCell"/>
</dbReference>
<dbReference type="GO" id="GO:0071424">
    <property type="term" value="F:rRNA (cytosine-N4-)-methyltransferase activity"/>
    <property type="evidence" value="ECO:0007669"/>
    <property type="project" value="UniProtKB-UniRule"/>
</dbReference>
<dbReference type="GO" id="GO:0070475">
    <property type="term" value="P:rRNA base methylation"/>
    <property type="evidence" value="ECO:0007669"/>
    <property type="project" value="UniProtKB-UniRule"/>
</dbReference>
<dbReference type="Gene3D" id="1.10.150.170">
    <property type="entry name" value="Putative methyltransferase TM0872, insert domain"/>
    <property type="match status" value="1"/>
</dbReference>
<dbReference type="Gene3D" id="3.40.50.150">
    <property type="entry name" value="Vaccinia Virus protein VP39"/>
    <property type="match status" value="1"/>
</dbReference>
<dbReference type="HAMAP" id="MF_01007">
    <property type="entry name" value="16SrRNA_methyltr_H"/>
    <property type="match status" value="1"/>
</dbReference>
<dbReference type="InterPro" id="IPR002903">
    <property type="entry name" value="RsmH"/>
</dbReference>
<dbReference type="InterPro" id="IPR023397">
    <property type="entry name" value="SAM-dep_MeTrfase_MraW_recog"/>
</dbReference>
<dbReference type="InterPro" id="IPR029063">
    <property type="entry name" value="SAM-dependent_MTases_sf"/>
</dbReference>
<dbReference type="NCBIfam" id="TIGR00006">
    <property type="entry name" value="16S rRNA (cytosine(1402)-N(4))-methyltransferase RsmH"/>
    <property type="match status" value="1"/>
</dbReference>
<dbReference type="PANTHER" id="PTHR11265:SF0">
    <property type="entry name" value="12S RRNA N4-METHYLCYTIDINE METHYLTRANSFERASE"/>
    <property type="match status" value="1"/>
</dbReference>
<dbReference type="PANTHER" id="PTHR11265">
    <property type="entry name" value="S-ADENOSYL-METHYLTRANSFERASE MRAW"/>
    <property type="match status" value="1"/>
</dbReference>
<dbReference type="Pfam" id="PF01795">
    <property type="entry name" value="Methyltransf_5"/>
    <property type="match status" value="1"/>
</dbReference>
<dbReference type="PIRSF" id="PIRSF004486">
    <property type="entry name" value="MraW"/>
    <property type="match status" value="1"/>
</dbReference>
<dbReference type="SUPFAM" id="SSF81799">
    <property type="entry name" value="Putative methyltransferase TM0872, insert domain"/>
    <property type="match status" value="1"/>
</dbReference>
<dbReference type="SUPFAM" id="SSF53335">
    <property type="entry name" value="S-adenosyl-L-methionine-dependent methyltransferases"/>
    <property type="match status" value="1"/>
</dbReference>
<keyword id="KW-0963">Cytoplasm</keyword>
<keyword id="KW-0489">Methyltransferase</keyword>
<keyword id="KW-0698">rRNA processing</keyword>
<keyword id="KW-0949">S-adenosyl-L-methionine</keyword>
<keyword id="KW-0808">Transferase</keyword>
<organism>
    <name type="scientific">Aster yellows witches'-broom phytoplasma (strain AYWB)</name>
    <dbReference type="NCBI Taxonomy" id="322098"/>
    <lineage>
        <taxon>Bacteria</taxon>
        <taxon>Bacillati</taxon>
        <taxon>Mycoplasmatota</taxon>
        <taxon>Mollicutes</taxon>
        <taxon>Acholeplasmatales</taxon>
        <taxon>Acholeplasmataceae</taxon>
        <taxon>Candidatus Phytoplasma</taxon>
        <taxon>16SrI (Aster yellows group)</taxon>
    </lineage>
</organism>
<gene>
    <name evidence="1" type="primary">rsmH</name>
    <name type="synonym">mraW</name>
    <name type="ordered locus">AYWB_652</name>
</gene>
<name>RSMH_AYWBP</name>
<protein>
    <recommendedName>
        <fullName evidence="1">Ribosomal RNA small subunit methyltransferase H</fullName>
        <ecNumber evidence="1">2.1.1.199</ecNumber>
    </recommendedName>
    <alternativeName>
        <fullName evidence="1">16S rRNA m(4)C1402 methyltransferase</fullName>
    </alternativeName>
    <alternativeName>
        <fullName evidence="1">rRNA (cytosine-N(4)-)-methyltransferase RsmH</fullName>
    </alternativeName>
</protein>